<dbReference type="EC" id="2.5.1.55" evidence="1"/>
<dbReference type="EMBL" id="AE008922">
    <property type="protein sequence ID" value="AAM40992.1"/>
    <property type="molecule type" value="Genomic_DNA"/>
</dbReference>
<dbReference type="RefSeq" id="NP_637068.1">
    <property type="nucleotide sequence ID" value="NC_003902.1"/>
</dbReference>
<dbReference type="RefSeq" id="WP_011036875.1">
    <property type="nucleotide sequence ID" value="NC_003902.1"/>
</dbReference>
<dbReference type="SMR" id="Q8P9Z5"/>
<dbReference type="STRING" id="190485.XCC1698"/>
<dbReference type="EnsemblBacteria" id="AAM40992">
    <property type="protein sequence ID" value="AAM40992"/>
    <property type="gene ID" value="XCC1698"/>
</dbReference>
<dbReference type="GeneID" id="58013749"/>
<dbReference type="KEGG" id="xcc:XCC1698"/>
<dbReference type="PATRIC" id="fig|190485.4.peg.1810"/>
<dbReference type="eggNOG" id="COG2877">
    <property type="taxonomic scope" value="Bacteria"/>
</dbReference>
<dbReference type="HOGENOM" id="CLU_036666_0_0_6"/>
<dbReference type="OrthoDB" id="9776934at2"/>
<dbReference type="UniPathway" id="UPA00030"/>
<dbReference type="UniPathway" id="UPA00357">
    <property type="reaction ID" value="UER00474"/>
</dbReference>
<dbReference type="Proteomes" id="UP000001010">
    <property type="component" value="Chromosome"/>
</dbReference>
<dbReference type="GO" id="GO:0005829">
    <property type="term" value="C:cytosol"/>
    <property type="evidence" value="ECO:0000318"/>
    <property type="project" value="GO_Central"/>
</dbReference>
<dbReference type="GO" id="GO:0008676">
    <property type="term" value="F:3-deoxy-8-phosphooctulonate synthase activity"/>
    <property type="evidence" value="ECO:0000318"/>
    <property type="project" value="GO_Central"/>
</dbReference>
<dbReference type="GO" id="GO:0019294">
    <property type="term" value="P:keto-3-deoxy-D-manno-octulosonic acid biosynthetic process"/>
    <property type="evidence" value="ECO:0000318"/>
    <property type="project" value="GO_Central"/>
</dbReference>
<dbReference type="Gene3D" id="3.20.20.70">
    <property type="entry name" value="Aldolase class I"/>
    <property type="match status" value="1"/>
</dbReference>
<dbReference type="HAMAP" id="MF_00056">
    <property type="entry name" value="KDO8P_synth"/>
    <property type="match status" value="1"/>
</dbReference>
<dbReference type="InterPro" id="IPR013785">
    <property type="entry name" value="Aldolase_TIM"/>
</dbReference>
<dbReference type="InterPro" id="IPR006218">
    <property type="entry name" value="DAHP1/KDSA"/>
</dbReference>
<dbReference type="InterPro" id="IPR006269">
    <property type="entry name" value="KDO8P_synthase"/>
</dbReference>
<dbReference type="NCBIfam" id="TIGR01362">
    <property type="entry name" value="KDO8P_synth"/>
    <property type="match status" value="1"/>
</dbReference>
<dbReference type="NCBIfam" id="NF003543">
    <property type="entry name" value="PRK05198.1"/>
    <property type="match status" value="1"/>
</dbReference>
<dbReference type="PANTHER" id="PTHR21057">
    <property type="entry name" value="PHOSPHO-2-DEHYDRO-3-DEOXYHEPTONATE ALDOLASE"/>
    <property type="match status" value="1"/>
</dbReference>
<dbReference type="Pfam" id="PF00793">
    <property type="entry name" value="DAHP_synth_1"/>
    <property type="match status" value="1"/>
</dbReference>
<dbReference type="SUPFAM" id="SSF51569">
    <property type="entry name" value="Aldolase"/>
    <property type="match status" value="1"/>
</dbReference>
<comment type="catalytic activity">
    <reaction evidence="1">
        <text>D-arabinose 5-phosphate + phosphoenolpyruvate + H2O = 3-deoxy-alpha-D-manno-2-octulosonate-8-phosphate + phosphate</text>
        <dbReference type="Rhea" id="RHEA:14053"/>
        <dbReference type="ChEBI" id="CHEBI:15377"/>
        <dbReference type="ChEBI" id="CHEBI:43474"/>
        <dbReference type="ChEBI" id="CHEBI:57693"/>
        <dbReference type="ChEBI" id="CHEBI:58702"/>
        <dbReference type="ChEBI" id="CHEBI:85985"/>
        <dbReference type="EC" id="2.5.1.55"/>
    </reaction>
</comment>
<comment type="pathway">
    <text evidence="1">Carbohydrate biosynthesis; 3-deoxy-D-manno-octulosonate biosynthesis; 3-deoxy-D-manno-octulosonate from D-ribulose 5-phosphate: step 2/3.</text>
</comment>
<comment type="pathway">
    <text evidence="1">Bacterial outer membrane biogenesis; lipopolysaccharide biosynthesis.</text>
</comment>
<comment type="subcellular location">
    <subcellularLocation>
        <location evidence="1">Cytoplasm</location>
    </subcellularLocation>
</comment>
<comment type="similarity">
    <text evidence="1">Belongs to the KdsA family.</text>
</comment>
<feature type="chain" id="PRO_0000187174" description="2-dehydro-3-deoxyphosphooctonate aldolase">
    <location>
        <begin position="1"/>
        <end position="276"/>
    </location>
</feature>
<evidence type="ECO:0000255" key="1">
    <source>
        <dbReference type="HAMAP-Rule" id="MF_00056"/>
    </source>
</evidence>
<gene>
    <name evidence="1" type="primary">kdsA</name>
    <name type="ordered locus">XCC1698</name>
</gene>
<name>KDSA_XANCP</name>
<reference key="1">
    <citation type="journal article" date="2002" name="Nature">
        <title>Comparison of the genomes of two Xanthomonas pathogens with differing host specificities.</title>
        <authorList>
            <person name="da Silva A.C.R."/>
            <person name="Ferro J.A."/>
            <person name="Reinach F.C."/>
            <person name="Farah C.S."/>
            <person name="Furlan L.R."/>
            <person name="Quaggio R.B."/>
            <person name="Monteiro-Vitorello C.B."/>
            <person name="Van Sluys M.A."/>
            <person name="Almeida N.F. Jr."/>
            <person name="Alves L.M.C."/>
            <person name="do Amaral A.M."/>
            <person name="Bertolini M.C."/>
            <person name="Camargo L.E.A."/>
            <person name="Camarotte G."/>
            <person name="Cannavan F."/>
            <person name="Cardozo J."/>
            <person name="Chambergo F."/>
            <person name="Ciapina L.P."/>
            <person name="Cicarelli R.M.B."/>
            <person name="Coutinho L.L."/>
            <person name="Cursino-Santos J.R."/>
            <person name="El-Dorry H."/>
            <person name="Faria J.B."/>
            <person name="Ferreira A.J.S."/>
            <person name="Ferreira R.C.C."/>
            <person name="Ferro M.I.T."/>
            <person name="Formighieri E.F."/>
            <person name="Franco M.C."/>
            <person name="Greggio C.C."/>
            <person name="Gruber A."/>
            <person name="Katsuyama A.M."/>
            <person name="Kishi L.T."/>
            <person name="Leite R.P."/>
            <person name="Lemos E.G.M."/>
            <person name="Lemos M.V.F."/>
            <person name="Locali E.C."/>
            <person name="Machado M.A."/>
            <person name="Madeira A.M.B.N."/>
            <person name="Martinez-Rossi N.M."/>
            <person name="Martins E.C."/>
            <person name="Meidanis J."/>
            <person name="Menck C.F.M."/>
            <person name="Miyaki C.Y."/>
            <person name="Moon D.H."/>
            <person name="Moreira L.M."/>
            <person name="Novo M.T.M."/>
            <person name="Okura V.K."/>
            <person name="Oliveira M.C."/>
            <person name="Oliveira V.R."/>
            <person name="Pereira H.A."/>
            <person name="Rossi A."/>
            <person name="Sena J.A.D."/>
            <person name="Silva C."/>
            <person name="de Souza R.F."/>
            <person name="Spinola L.A.F."/>
            <person name="Takita M.A."/>
            <person name="Tamura R.E."/>
            <person name="Teixeira E.C."/>
            <person name="Tezza R.I.D."/>
            <person name="Trindade dos Santos M."/>
            <person name="Truffi D."/>
            <person name="Tsai S.M."/>
            <person name="White F.F."/>
            <person name="Setubal J.C."/>
            <person name="Kitajima J.P."/>
        </authorList>
    </citation>
    <scope>NUCLEOTIDE SEQUENCE [LARGE SCALE GENOMIC DNA]</scope>
    <source>
        <strain>ATCC 33913 / DSM 3586 / NCPPB 528 / LMG 568 / P 25</strain>
    </source>
</reference>
<protein>
    <recommendedName>
        <fullName evidence="1">2-dehydro-3-deoxyphosphooctonate aldolase</fullName>
        <ecNumber evidence="1">2.5.1.55</ecNumber>
    </recommendedName>
    <alternativeName>
        <fullName evidence="1">3-deoxy-D-manno-octulosonic acid 8-phosphate synthase</fullName>
    </alternativeName>
    <alternativeName>
        <fullName evidence="1">KDO-8-phosphate synthase</fullName>
        <shortName evidence="1">KDO 8-P synthase</shortName>
        <shortName evidence="1">KDOPS</shortName>
    </alternativeName>
    <alternativeName>
        <fullName evidence="1">Phospho-2-dehydro-3-deoxyoctonate aldolase</fullName>
    </alternativeName>
</protein>
<sequence length="276" mass="29755">MKLCDFEVGLDQPLFLIAGPCVIESMQLQLDVAGKLKEITGKLGINFIFKSSFDKANRTSGTSFRGPGLEEGLKVLDAVKKQIGVPVLTDVHEYTPMNEVAAVVDVLQTPAFLVRQTDFIKNVCAAGKPVNIKKGQFLAPWDMKPVVDKAKSTGNEQIMVCERGASFGYNNLVSDMRSLSVMRDTGCPVVFDATHSVQLPGGQGSSSGGQREFVPVLARAAVAVGISGLFAETHPDPSKALSDGPNAWPLDRMEELLETLMELDAVTKKHGFARFA</sequence>
<keyword id="KW-0963">Cytoplasm</keyword>
<keyword id="KW-0448">Lipopolysaccharide biosynthesis</keyword>
<keyword id="KW-1185">Reference proteome</keyword>
<keyword id="KW-0808">Transferase</keyword>
<proteinExistence type="inferred from homology"/>
<accession>Q8P9Z5</accession>
<organism>
    <name type="scientific">Xanthomonas campestris pv. campestris (strain ATCC 33913 / DSM 3586 / NCPPB 528 / LMG 568 / P 25)</name>
    <dbReference type="NCBI Taxonomy" id="190485"/>
    <lineage>
        <taxon>Bacteria</taxon>
        <taxon>Pseudomonadati</taxon>
        <taxon>Pseudomonadota</taxon>
        <taxon>Gammaproteobacteria</taxon>
        <taxon>Lysobacterales</taxon>
        <taxon>Lysobacteraceae</taxon>
        <taxon>Xanthomonas</taxon>
    </lineage>
</organism>